<reference key="1">
    <citation type="journal article" date="2004" name="Proc. Natl. Acad. Sci. U.S.A.">
        <title>Complete genomes of two clinical Staphylococcus aureus strains: evidence for the rapid evolution of virulence and drug resistance.</title>
        <authorList>
            <person name="Holden M.T.G."/>
            <person name="Feil E.J."/>
            <person name="Lindsay J.A."/>
            <person name="Peacock S.J."/>
            <person name="Day N.P.J."/>
            <person name="Enright M.C."/>
            <person name="Foster T.J."/>
            <person name="Moore C.E."/>
            <person name="Hurst L."/>
            <person name="Atkin R."/>
            <person name="Barron A."/>
            <person name="Bason N."/>
            <person name="Bentley S.D."/>
            <person name="Chillingworth C."/>
            <person name="Chillingworth T."/>
            <person name="Churcher C."/>
            <person name="Clark L."/>
            <person name="Corton C."/>
            <person name="Cronin A."/>
            <person name="Doggett J."/>
            <person name="Dowd L."/>
            <person name="Feltwell T."/>
            <person name="Hance Z."/>
            <person name="Harris B."/>
            <person name="Hauser H."/>
            <person name="Holroyd S."/>
            <person name="Jagels K."/>
            <person name="James K.D."/>
            <person name="Lennard N."/>
            <person name="Line A."/>
            <person name="Mayes R."/>
            <person name="Moule S."/>
            <person name="Mungall K."/>
            <person name="Ormond D."/>
            <person name="Quail M.A."/>
            <person name="Rabbinowitsch E."/>
            <person name="Rutherford K.M."/>
            <person name="Sanders M."/>
            <person name="Sharp S."/>
            <person name="Simmonds M."/>
            <person name="Stevens K."/>
            <person name="Whitehead S."/>
            <person name="Barrell B.G."/>
            <person name="Spratt B.G."/>
            <person name="Parkhill J."/>
        </authorList>
    </citation>
    <scope>NUCLEOTIDE SEQUENCE [LARGE SCALE GENOMIC DNA]</scope>
    <source>
        <strain>MRSA252</strain>
    </source>
</reference>
<accession>Q6GIL7</accession>
<sequence>MAKKIVSDLDLKGKTVLVRADFNVPLKDGEITNDNRIVQALPTIQYIIEQGGKIVLFSHLGKVKEESDKAKLTLRPVAEDLSKKLDKEVVFVPETRGEKLEAAIKDLKEGDVLLVENTRYEDLDGKKESKNDPELGKYWASLGDVFVNDAFGTAHREHASNVGISTHLETAAGFLMDKEIKFIGGVVNDPHKPVVAILGGAKVSDKINVIKNLVNIADKIIIGGGMAYTFLKAQGKEIGISLLEEDKIDFAKDLLEKHGDKIVLPVDTKVAKEFSNDAKITVVPSDSIPADQEGMDIGPNTVKLFADELEGAHTVVWNGPMGVFEFSNFAQGTIGVCKAIANLKDAITIIGGGDSAAAAISLGFENDFTHISTGGGASLEYLEGKELPGIKAINNK</sequence>
<gene>
    <name evidence="1" type="primary">pgk</name>
    <name type="ordered locus">SAR0829</name>
</gene>
<feature type="chain" id="PRO_0000146004" description="Phosphoglycerate kinase">
    <location>
        <begin position="1"/>
        <end position="396"/>
    </location>
</feature>
<feature type="binding site" evidence="1">
    <location>
        <begin position="21"/>
        <end position="23"/>
    </location>
    <ligand>
        <name>substrate</name>
    </ligand>
</feature>
<feature type="binding site" evidence="1">
    <location>
        <position position="36"/>
    </location>
    <ligand>
        <name>substrate</name>
    </ligand>
</feature>
<feature type="binding site" evidence="1">
    <location>
        <begin position="59"/>
        <end position="62"/>
    </location>
    <ligand>
        <name>substrate</name>
    </ligand>
</feature>
<feature type="binding site" evidence="1">
    <location>
        <position position="119"/>
    </location>
    <ligand>
        <name>substrate</name>
    </ligand>
</feature>
<feature type="binding site" evidence="1">
    <location>
        <position position="156"/>
    </location>
    <ligand>
        <name>substrate</name>
    </ligand>
</feature>
<feature type="binding site" evidence="1">
    <location>
        <position position="206"/>
    </location>
    <ligand>
        <name>ATP</name>
        <dbReference type="ChEBI" id="CHEBI:30616"/>
    </ligand>
</feature>
<feature type="binding site" evidence="1">
    <location>
        <position position="294"/>
    </location>
    <ligand>
        <name>ATP</name>
        <dbReference type="ChEBI" id="CHEBI:30616"/>
    </ligand>
</feature>
<feature type="binding site" evidence="1">
    <location>
        <position position="325"/>
    </location>
    <ligand>
        <name>ATP</name>
        <dbReference type="ChEBI" id="CHEBI:30616"/>
    </ligand>
</feature>
<feature type="binding site" evidence="1">
    <location>
        <begin position="352"/>
        <end position="355"/>
    </location>
    <ligand>
        <name>ATP</name>
        <dbReference type="ChEBI" id="CHEBI:30616"/>
    </ligand>
</feature>
<feature type="helix" evidence="2">
    <location>
        <begin position="6"/>
        <end position="8"/>
    </location>
</feature>
<feature type="strand" evidence="2">
    <location>
        <begin position="15"/>
        <end position="19"/>
    </location>
</feature>
<feature type="strand" evidence="2">
    <location>
        <begin position="27"/>
        <end position="29"/>
    </location>
</feature>
<feature type="helix" evidence="2">
    <location>
        <begin position="35"/>
        <end position="49"/>
    </location>
</feature>
<feature type="strand" evidence="2">
    <location>
        <begin position="53"/>
        <end position="57"/>
    </location>
</feature>
<feature type="helix" evidence="2">
    <location>
        <begin position="66"/>
        <end position="68"/>
    </location>
</feature>
<feature type="helix" evidence="2">
    <location>
        <begin position="70"/>
        <end position="72"/>
    </location>
</feature>
<feature type="helix" evidence="2">
    <location>
        <begin position="75"/>
        <end position="85"/>
    </location>
</feature>
<feature type="strand" evidence="2">
    <location>
        <begin position="90"/>
        <end position="93"/>
    </location>
</feature>
<feature type="strand" evidence="2">
    <location>
        <begin position="95"/>
        <end position="97"/>
    </location>
</feature>
<feature type="helix" evidence="2">
    <location>
        <begin position="98"/>
        <end position="105"/>
    </location>
</feature>
<feature type="strand" evidence="2">
    <location>
        <begin position="112"/>
        <end position="115"/>
    </location>
</feature>
<feature type="helix" evidence="2">
    <location>
        <begin position="118"/>
        <end position="122"/>
    </location>
</feature>
<feature type="turn" evidence="2">
    <location>
        <begin position="123"/>
        <end position="131"/>
    </location>
</feature>
<feature type="helix" evidence="2">
    <location>
        <begin position="133"/>
        <end position="140"/>
    </location>
</feature>
<feature type="strand" evidence="2">
    <location>
        <begin position="144"/>
        <end position="148"/>
    </location>
</feature>
<feature type="helix" evidence="2">
    <location>
        <begin position="151"/>
        <end position="153"/>
    </location>
</feature>
<feature type="turn" evidence="2">
    <location>
        <begin position="159"/>
        <end position="161"/>
    </location>
</feature>
<feature type="helix" evidence="2">
    <location>
        <begin position="162"/>
        <end position="165"/>
    </location>
</feature>
<feature type="strand" evidence="2">
    <location>
        <begin position="170"/>
        <end position="172"/>
    </location>
</feature>
<feature type="helix" evidence="2">
    <location>
        <begin position="174"/>
        <end position="188"/>
    </location>
</feature>
<feature type="strand" evidence="2">
    <location>
        <begin position="192"/>
        <end position="198"/>
    </location>
</feature>
<feature type="helix" evidence="2">
    <location>
        <begin position="203"/>
        <end position="213"/>
    </location>
</feature>
<feature type="turn" evidence="2">
    <location>
        <begin position="214"/>
        <end position="216"/>
    </location>
</feature>
<feature type="strand" evidence="2">
    <location>
        <begin position="218"/>
        <end position="222"/>
    </location>
</feature>
<feature type="helix" evidence="2">
    <location>
        <begin position="227"/>
        <end position="233"/>
    </location>
</feature>
<feature type="helix" evidence="2">
    <location>
        <begin position="245"/>
        <end position="247"/>
    </location>
</feature>
<feature type="helix" evidence="2">
    <location>
        <begin position="248"/>
        <end position="257"/>
    </location>
</feature>
<feature type="turn" evidence="2">
    <location>
        <begin position="259"/>
        <end position="261"/>
    </location>
</feature>
<feature type="strand" evidence="2">
    <location>
        <begin position="266"/>
        <end position="275"/>
    </location>
</feature>
<feature type="strand" evidence="2">
    <location>
        <begin position="281"/>
        <end position="284"/>
    </location>
</feature>
<feature type="helix" evidence="2">
    <location>
        <begin position="285"/>
        <end position="287"/>
    </location>
</feature>
<feature type="strand" evidence="2">
    <location>
        <begin position="293"/>
        <end position="297"/>
    </location>
</feature>
<feature type="helix" evidence="2">
    <location>
        <begin position="299"/>
        <end position="307"/>
    </location>
</feature>
<feature type="turn" evidence="2">
    <location>
        <begin position="308"/>
        <end position="311"/>
    </location>
</feature>
<feature type="strand" evidence="2">
    <location>
        <begin position="313"/>
        <end position="319"/>
    </location>
</feature>
<feature type="helix" evidence="2">
    <location>
        <begin position="327"/>
        <end position="329"/>
    </location>
</feature>
<feature type="helix" evidence="2">
    <location>
        <begin position="331"/>
        <end position="342"/>
    </location>
</feature>
<feature type="strand" evidence="2">
    <location>
        <begin position="344"/>
        <end position="350"/>
    </location>
</feature>
<feature type="helix" evidence="2">
    <location>
        <begin position="353"/>
        <end position="361"/>
    </location>
</feature>
<feature type="helix" evidence="2">
    <location>
        <begin position="365"/>
        <end position="367"/>
    </location>
</feature>
<feature type="strand" evidence="2">
    <location>
        <begin position="368"/>
        <end position="371"/>
    </location>
</feature>
<feature type="helix" evidence="2">
    <location>
        <begin position="375"/>
        <end position="382"/>
    </location>
</feature>
<feature type="helix" evidence="2">
    <location>
        <begin position="388"/>
        <end position="391"/>
    </location>
</feature>
<comment type="catalytic activity">
    <reaction evidence="1">
        <text>(2R)-3-phosphoglycerate + ATP = (2R)-3-phospho-glyceroyl phosphate + ADP</text>
        <dbReference type="Rhea" id="RHEA:14801"/>
        <dbReference type="ChEBI" id="CHEBI:30616"/>
        <dbReference type="ChEBI" id="CHEBI:57604"/>
        <dbReference type="ChEBI" id="CHEBI:58272"/>
        <dbReference type="ChEBI" id="CHEBI:456216"/>
        <dbReference type="EC" id="2.7.2.3"/>
    </reaction>
</comment>
<comment type="pathway">
    <text evidence="1">Carbohydrate degradation; glycolysis; pyruvate from D-glyceraldehyde 3-phosphate: step 2/5.</text>
</comment>
<comment type="subunit">
    <text evidence="1">Monomer.</text>
</comment>
<comment type="subcellular location">
    <subcellularLocation>
        <location evidence="1">Cytoplasm</location>
    </subcellularLocation>
</comment>
<comment type="similarity">
    <text evidence="1">Belongs to the phosphoglycerate kinase family.</text>
</comment>
<organism>
    <name type="scientific">Staphylococcus aureus (strain MRSA252)</name>
    <dbReference type="NCBI Taxonomy" id="282458"/>
    <lineage>
        <taxon>Bacteria</taxon>
        <taxon>Bacillati</taxon>
        <taxon>Bacillota</taxon>
        <taxon>Bacilli</taxon>
        <taxon>Bacillales</taxon>
        <taxon>Staphylococcaceae</taxon>
        <taxon>Staphylococcus</taxon>
    </lineage>
</organism>
<protein>
    <recommendedName>
        <fullName evidence="1">Phosphoglycerate kinase</fullName>
        <ecNumber evidence="1">2.7.2.3</ecNumber>
    </recommendedName>
</protein>
<dbReference type="EC" id="2.7.2.3" evidence="1"/>
<dbReference type="EMBL" id="BX571856">
    <property type="protein sequence ID" value="CAG39838.1"/>
    <property type="molecule type" value="Genomic_DNA"/>
</dbReference>
<dbReference type="RefSeq" id="WP_001074749.1">
    <property type="nucleotide sequence ID" value="NC_002952.2"/>
</dbReference>
<dbReference type="PDB" id="4DG5">
    <property type="method" value="X-ray"/>
    <property type="resolution" value="2.30 A"/>
    <property type="chains" value="A=2-396"/>
</dbReference>
<dbReference type="PDBsum" id="4DG5"/>
<dbReference type="SMR" id="Q6GIL7"/>
<dbReference type="KEGG" id="sar:SAR0829"/>
<dbReference type="HOGENOM" id="CLU_025427_0_2_9"/>
<dbReference type="UniPathway" id="UPA00109">
    <property type="reaction ID" value="UER00185"/>
</dbReference>
<dbReference type="EvolutionaryTrace" id="Q6GIL7"/>
<dbReference type="Proteomes" id="UP000000596">
    <property type="component" value="Chromosome"/>
</dbReference>
<dbReference type="GO" id="GO:0005829">
    <property type="term" value="C:cytosol"/>
    <property type="evidence" value="ECO:0007669"/>
    <property type="project" value="TreeGrafter"/>
</dbReference>
<dbReference type="GO" id="GO:0043531">
    <property type="term" value="F:ADP binding"/>
    <property type="evidence" value="ECO:0007669"/>
    <property type="project" value="TreeGrafter"/>
</dbReference>
<dbReference type="GO" id="GO:0005524">
    <property type="term" value="F:ATP binding"/>
    <property type="evidence" value="ECO:0007669"/>
    <property type="project" value="UniProtKB-KW"/>
</dbReference>
<dbReference type="GO" id="GO:0004618">
    <property type="term" value="F:phosphoglycerate kinase activity"/>
    <property type="evidence" value="ECO:0007669"/>
    <property type="project" value="UniProtKB-UniRule"/>
</dbReference>
<dbReference type="GO" id="GO:0006094">
    <property type="term" value="P:gluconeogenesis"/>
    <property type="evidence" value="ECO:0007669"/>
    <property type="project" value="TreeGrafter"/>
</dbReference>
<dbReference type="GO" id="GO:0006096">
    <property type="term" value="P:glycolytic process"/>
    <property type="evidence" value="ECO:0007669"/>
    <property type="project" value="UniProtKB-UniRule"/>
</dbReference>
<dbReference type="CDD" id="cd00318">
    <property type="entry name" value="Phosphoglycerate_kinase"/>
    <property type="match status" value="1"/>
</dbReference>
<dbReference type="FunFam" id="3.40.50.1260:FF:000001">
    <property type="entry name" value="Phosphoglycerate kinase"/>
    <property type="match status" value="1"/>
</dbReference>
<dbReference type="FunFam" id="3.40.50.1260:FF:000008">
    <property type="entry name" value="Phosphoglycerate kinase"/>
    <property type="match status" value="1"/>
</dbReference>
<dbReference type="Gene3D" id="3.40.50.1260">
    <property type="entry name" value="Phosphoglycerate kinase, N-terminal domain"/>
    <property type="match status" value="2"/>
</dbReference>
<dbReference type="HAMAP" id="MF_00145">
    <property type="entry name" value="Phosphoglyc_kinase"/>
    <property type="match status" value="1"/>
</dbReference>
<dbReference type="InterPro" id="IPR001576">
    <property type="entry name" value="Phosphoglycerate_kinase"/>
</dbReference>
<dbReference type="InterPro" id="IPR015911">
    <property type="entry name" value="Phosphoglycerate_kinase_CS"/>
</dbReference>
<dbReference type="InterPro" id="IPR015824">
    <property type="entry name" value="Phosphoglycerate_kinase_N"/>
</dbReference>
<dbReference type="InterPro" id="IPR036043">
    <property type="entry name" value="Phosphoglycerate_kinase_sf"/>
</dbReference>
<dbReference type="PANTHER" id="PTHR11406">
    <property type="entry name" value="PHOSPHOGLYCERATE KINASE"/>
    <property type="match status" value="1"/>
</dbReference>
<dbReference type="PANTHER" id="PTHR11406:SF23">
    <property type="entry name" value="PHOSPHOGLYCERATE KINASE 1, CHLOROPLASTIC-RELATED"/>
    <property type="match status" value="1"/>
</dbReference>
<dbReference type="Pfam" id="PF00162">
    <property type="entry name" value="PGK"/>
    <property type="match status" value="1"/>
</dbReference>
<dbReference type="PIRSF" id="PIRSF000724">
    <property type="entry name" value="Pgk"/>
    <property type="match status" value="1"/>
</dbReference>
<dbReference type="PRINTS" id="PR00477">
    <property type="entry name" value="PHGLYCKINASE"/>
</dbReference>
<dbReference type="SUPFAM" id="SSF53748">
    <property type="entry name" value="Phosphoglycerate kinase"/>
    <property type="match status" value="1"/>
</dbReference>
<dbReference type="PROSITE" id="PS00111">
    <property type="entry name" value="PGLYCERATE_KINASE"/>
    <property type="match status" value="1"/>
</dbReference>
<keyword id="KW-0002">3D-structure</keyword>
<keyword id="KW-0067">ATP-binding</keyword>
<keyword id="KW-0963">Cytoplasm</keyword>
<keyword id="KW-0324">Glycolysis</keyword>
<keyword id="KW-0418">Kinase</keyword>
<keyword id="KW-0547">Nucleotide-binding</keyword>
<keyword id="KW-0808">Transferase</keyword>
<evidence type="ECO:0000255" key="1">
    <source>
        <dbReference type="HAMAP-Rule" id="MF_00145"/>
    </source>
</evidence>
<evidence type="ECO:0007829" key="2">
    <source>
        <dbReference type="PDB" id="4DG5"/>
    </source>
</evidence>
<proteinExistence type="evidence at protein level"/>
<name>PGK_STAAR</name>